<reference key="1">
    <citation type="journal article" date="1995" name="Plant Mol. Biol. Rep.">
        <title>Complete nucleotide sequence of the Porphyra purpurea chloroplast genome.</title>
        <authorList>
            <person name="Reith M.E."/>
            <person name="Munholland J."/>
        </authorList>
    </citation>
    <scope>NUCLEOTIDE SEQUENCE [LARGE SCALE GENOMIC DNA]</scope>
    <source>
        <strain>Avonport</strain>
    </source>
</reference>
<comment type="subcellular location">
    <subcellularLocation>
        <location>Plastid</location>
        <location>Chloroplast</location>
    </subcellularLocation>
</comment>
<comment type="similarity">
    <text evidence="1">Belongs to the universal ribosomal protein uL29 family.</text>
</comment>
<proteinExistence type="inferred from homology"/>
<gene>
    <name type="primary">rpl29</name>
</gene>
<protein>
    <recommendedName>
        <fullName evidence="1">Large ribosomal subunit protein uL29c</fullName>
    </recommendedName>
    <alternativeName>
        <fullName>50S ribosomal protein L29, chloroplastic</fullName>
    </alternativeName>
</protein>
<keyword id="KW-0150">Chloroplast</keyword>
<keyword id="KW-0934">Plastid</keyword>
<keyword id="KW-0687">Ribonucleoprotein</keyword>
<keyword id="KW-0689">Ribosomal protein</keyword>
<evidence type="ECO:0000305" key="1"/>
<dbReference type="EMBL" id="U38804">
    <property type="protein sequence ID" value="AAC08192.1"/>
    <property type="molecule type" value="Genomic_DNA"/>
</dbReference>
<dbReference type="PIR" id="S73227">
    <property type="entry name" value="S73227"/>
</dbReference>
<dbReference type="RefSeq" id="NP_053916.1">
    <property type="nucleotide sequence ID" value="NC_000925.1"/>
</dbReference>
<dbReference type="SMR" id="P51306"/>
<dbReference type="GeneID" id="809935"/>
<dbReference type="GO" id="GO:0009507">
    <property type="term" value="C:chloroplast"/>
    <property type="evidence" value="ECO:0007669"/>
    <property type="project" value="UniProtKB-SubCell"/>
</dbReference>
<dbReference type="GO" id="GO:0022625">
    <property type="term" value="C:cytosolic large ribosomal subunit"/>
    <property type="evidence" value="ECO:0007669"/>
    <property type="project" value="TreeGrafter"/>
</dbReference>
<dbReference type="GO" id="GO:0003735">
    <property type="term" value="F:structural constituent of ribosome"/>
    <property type="evidence" value="ECO:0007669"/>
    <property type="project" value="InterPro"/>
</dbReference>
<dbReference type="GO" id="GO:0006412">
    <property type="term" value="P:translation"/>
    <property type="evidence" value="ECO:0007669"/>
    <property type="project" value="UniProtKB-UniRule"/>
</dbReference>
<dbReference type="CDD" id="cd00427">
    <property type="entry name" value="Ribosomal_L29_HIP"/>
    <property type="match status" value="1"/>
</dbReference>
<dbReference type="Gene3D" id="1.10.287.310">
    <property type="match status" value="1"/>
</dbReference>
<dbReference type="HAMAP" id="MF_00374">
    <property type="entry name" value="Ribosomal_uL29"/>
    <property type="match status" value="1"/>
</dbReference>
<dbReference type="InterPro" id="IPR050063">
    <property type="entry name" value="Ribosomal_protein_uL29"/>
</dbReference>
<dbReference type="InterPro" id="IPR001854">
    <property type="entry name" value="Ribosomal_uL29"/>
</dbReference>
<dbReference type="InterPro" id="IPR018254">
    <property type="entry name" value="Ribosomal_uL29_CS"/>
</dbReference>
<dbReference type="InterPro" id="IPR036049">
    <property type="entry name" value="Ribosomal_uL29_sf"/>
</dbReference>
<dbReference type="NCBIfam" id="TIGR00012">
    <property type="entry name" value="L29"/>
    <property type="match status" value="1"/>
</dbReference>
<dbReference type="PANTHER" id="PTHR10916">
    <property type="entry name" value="60S RIBOSOMAL PROTEIN L35/50S RIBOSOMAL PROTEIN L29"/>
    <property type="match status" value="1"/>
</dbReference>
<dbReference type="PANTHER" id="PTHR10916:SF0">
    <property type="entry name" value="LARGE RIBOSOMAL SUBUNIT PROTEIN UL29C"/>
    <property type="match status" value="1"/>
</dbReference>
<dbReference type="Pfam" id="PF00831">
    <property type="entry name" value="Ribosomal_L29"/>
    <property type="match status" value="1"/>
</dbReference>
<dbReference type="SUPFAM" id="SSF46561">
    <property type="entry name" value="Ribosomal protein L29 (L29p)"/>
    <property type="match status" value="1"/>
</dbReference>
<dbReference type="PROSITE" id="PS00579">
    <property type="entry name" value="RIBOSOMAL_L29"/>
    <property type="match status" value="1"/>
</dbReference>
<feature type="chain" id="PRO_0000130531" description="Large ribosomal subunit protein uL29c">
    <location>
        <begin position="1"/>
        <end position="67"/>
    </location>
</feature>
<name>RK29_PORPU</name>
<organism>
    <name type="scientific">Porphyra purpurea</name>
    <name type="common">Red seaweed</name>
    <name type="synonym">Ulva purpurea</name>
    <dbReference type="NCBI Taxonomy" id="2787"/>
    <lineage>
        <taxon>Eukaryota</taxon>
        <taxon>Rhodophyta</taxon>
        <taxon>Bangiophyceae</taxon>
        <taxon>Bangiales</taxon>
        <taxon>Bangiaceae</taxon>
        <taxon>Porphyra</taxon>
    </lineage>
</organism>
<accession>P51306</accession>
<geneLocation type="chloroplast"/>
<sequence length="67" mass="7885">MTLPKILDVIQMDDSSLSEEIIAIKRQLFDLRLKRATRQDFKPHLFKHSKHRLAQLLTVEKSRAQSN</sequence>